<dbReference type="EMBL" id="BA000018">
    <property type="protein sequence ID" value="BAB42515.1"/>
    <property type="molecule type" value="Genomic_DNA"/>
</dbReference>
<dbReference type="PIR" id="F89919">
    <property type="entry name" value="F89919"/>
</dbReference>
<dbReference type="RefSeq" id="WP_000473653.1">
    <property type="nucleotide sequence ID" value="NC_002745.2"/>
</dbReference>
<dbReference type="SMR" id="P60857"/>
<dbReference type="EnsemblBacteria" id="BAB42515">
    <property type="protein sequence ID" value="BAB42515"/>
    <property type="gene ID" value="BAB42515"/>
</dbReference>
<dbReference type="KEGG" id="sau:SA1255"/>
<dbReference type="HOGENOM" id="CLU_012312_5_3_9"/>
<dbReference type="GO" id="GO:0005737">
    <property type="term" value="C:cytoplasm"/>
    <property type="evidence" value="ECO:0007669"/>
    <property type="project" value="UniProtKB-SubCell"/>
</dbReference>
<dbReference type="GO" id="GO:0016301">
    <property type="term" value="F:kinase activity"/>
    <property type="evidence" value="ECO:0007669"/>
    <property type="project" value="UniProtKB-KW"/>
</dbReference>
<dbReference type="GO" id="GO:0046872">
    <property type="term" value="F:metal ion binding"/>
    <property type="evidence" value="ECO:0007669"/>
    <property type="project" value="UniProtKB-KW"/>
</dbReference>
<dbReference type="GO" id="GO:0009401">
    <property type="term" value="P:phosphoenolpyruvate-dependent sugar phosphotransferase system"/>
    <property type="evidence" value="ECO:0007669"/>
    <property type="project" value="UniProtKB-KW"/>
</dbReference>
<dbReference type="FunFam" id="2.70.70.10:FF:000001">
    <property type="entry name" value="PTS system glucose-specific IIA component"/>
    <property type="match status" value="1"/>
</dbReference>
<dbReference type="Gene3D" id="2.70.70.10">
    <property type="entry name" value="Glucose Permease (Domain IIA)"/>
    <property type="match status" value="1"/>
</dbReference>
<dbReference type="InterPro" id="IPR011055">
    <property type="entry name" value="Dup_hybrid_motif"/>
</dbReference>
<dbReference type="InterPro" id="IPR001127">
    <property type="entry name" value="PTS_EIIA_1_perm"/>
</dbReference>
<dbReference type="InterPro" id="IPR050890">
    <property type="entry name" value="PTS_EIIA_component"/>
</dbReference>
<dbReference type="NCBIfam" id="TIGR00830">
    <property type="entry name" value="PTBA"/>
    <property type="match status" value="1"/>
</dbReference>
<dbReference type="PANTHER" id="PTHR45008">
    <property type="entry name" value="PTS SYSTEM GLUCOSE-SPECIFIC EIIA COMPONENT"/>
    <property type="match status" value="1"/>
</dbReference>
<dbReference type="PANTHER" id="PTHR45008:SF1">
    <property type="entry name" value="PTS SYSTEM GLUCOSE-SPECIFIC EIIA COMPONENT"/>
    <property type="match status" value="1"/>
</dbReference>
<dbReference type="Pfam" id="PF00358">
    <property type="entry name" value="PTS_EIIA_1"/>
    <property type="match status" value="1"/>
</dbReference>
<dbReference type="SUPFAM" id="SSF51261">
    <property type="entry name" value="Duplicated hybrid motif"/>
    <property type="match status" value="1"/>
</dbReference>
<dbReference type="PROSITE" id="PS51093">
    <property type="entry name" value="PTS_EIIA_TYPE_1"/>
    <property type="match status" value="1"/>
</dbReference>
<dbReference type="PROSITE" id="PS00371">
    <property type="entry name" value="PTS_EIIA_TYPE_1_HIS"/>
    <property type="match status" value="1"/>
</dbReference>
<keyword id="KW-0963">Cytoplasm</keyword>
<keyword id="KW-0418">Kinase</keyword>
<keyword id="KW-0479">Metal-binding</keyword>
<keyword id="KW-0597">Phosphoprotein</keyword>
<keyword id="KW-0598">Phosphotransferase system</keyword>
<keyword id="KW-0762">Sugar transport</keyword>
<keyword id="KW-0808">Transferase</keyword>
<keyword id="KW-0813">Transport</keyword>
<keyword id="KW-0862">Zinc</keyword>
<accession>P60857</accession>
<accession>Q99U65</accession>
<comment type="function">
    <text evidence="1">The phosphoenolpyruvate-dependent sugar phosphotransferase system (sugar PTS), a major carbohydrate active transport system, catalyzes the phosphorylation of incoming sugar substrates concomitantly with their translocation across the cell membrane. The enzyme II complex composed of PtsG and Crr is involved in glucose transport.</text>
</comment>
<comment type="cofactor">
    <cofactor evidence="1">
        <name>Zn(2+)</name>
        <dbReference type="ChEBI" id="CHEBI:29105"/>
    </cofactor>
    <text evidence="1">Binds 1 zinc ion per glycerol kinase EIIA-Glc dimer. The zinc ion is important for dimerization.</text>
</comment>
<comment type="subunit">
    <text evidence="1">Heterodimer with glycerol kinase (glpk).</text>
</comment>
<comment type="subcellular location">
    <subcellularLocation>
        <location evidence="3">Cytoplasm</location>
    </subcellularLocation>
</comment>
<comment type="domain">
    <text evidence="2">The EIIA domain is phosphorylated by phospho-HPr on a histidyl residue. Then, it transfers the phosphoryl group to the EIIB domain.</text>
</comment>
<protein>
    <recommendedName>
        <fullName evidence="1">PTS system glucose-specific EIIA component</fullName>
    </recommendedName>
    <alternativeName>
        <fullName evidence="1">EIIA-Glc</fullName>
    </alternativeName>
    <alternativeName>
        <fullName evidence="1">EIII-Glc</fullName>
    </alternativeName>
    <alternativeName>
        <fullName evidence="1">Glucose-specific phosphotransferase enzyme IIA component</fullName>
    </alternativeName>
</protein>
<proteinExistence type="evidence at protein level"/>
<sequence length="166" mass="17961">MFKKLFGKGKEVQKDIAIYAPLTGEYVKIEDIPDPVFAQKMMGEGFGINPTEGEVVSPIAGRVDNVFPTKHAIGLKADNGLELLVHIGLDTVQLDGEGFEVLVSSGDEVNVGDPLVRFNLEFINNNAKSVISPIIITNTDQAASINIYDENAVIKGETKVIDVTMN</sequence>
<gene>
    <name type="primary">crr</name>
    <name type="ordered locus">SA1255</name>
</gene>
<name>PTGA_STAAN</name>
<organism>
    <name type="scientific">Staphylococcus aureus (strain N315)</name>
    <dbReference type="NCBI Taxonomy" id="158879"/>
    <lineage>
        <taxon>Bacteria</taxon>
        <taxon>Bacillati</taxon>
        <taxon>Bacillota</taxon>
        <taxon>Bacilli</taxon>
        <taxon>Bacillales</taxon>
        <taxon>Staphylococcaceae</taxon>
        <taxon>Staphylococcus</taxon>
    </lineage>
</organism>
<reference key="1">
    <citation type="journal article" date="2001" name="Lancet">
        <title>Whole genome sequencing of meticillin-resistant Staphylococcus aureus.</title>
        <authorList>
            <person name="Kuroda M."/>
            <person name="Ohta T."/>
            <person name="Uchiyama I."/>
            <person name="Baba T."/>
            <person name="Yuzawa H."/>
            <person name="Kobayashi I."/>
            <person name="Cui L."/>
            <person name="Oguchi A."/>
            <person name="Aoki K."/>
            <person name="Nagai Y."/>
            <person name="Lian J.-Q."/>
            <person name="Ito T."/>
            <person name="Kanamori M."/>
            <person name="Matsumaru H."/>
            <person name="Maruyama A."/>
            <person name="Murakami H."/>
            <person name="Hosoyama A."/>
            <person name="Mizutani-Ui Y."/>
            <person name="Takahashi N.K."/>
            <person name="Sawano T."/>
            <person name="Inoue R."/>
            <person name="Kaito C."/>
            <person name="Sekimizu K."/>
            <person name="Hirakawa H."/>
            <person name="Kuhara S."/>
            <person name="Goto S."/>
            <person name="Yabuzaki J."/>
            <person name="Kanehisa M."/>
            <person name="Yamashita A."/>
            <person name="Oshima K."/>
            <person name="Furuya K."/>
            <person name="Yoshino C."/>
            <person name="Shiba T."/>
            <person name="Hattori M."/>
            <person name="Ogasawara N."/>
            <person name="Hayashi H."/>
            <person name="Hiramatsu K."/>
        </authorList>
    </citation>
    <scope>NUCLEOTIDE SEQUENCE [LARGE SCALE GENOMIC DNA]</scope>
    <source>
        <strain>N315</strain>
    </source>
</reference>
<reference key="2">
    <citation type="journal article" date="2005" name="J. Microbiol. Methods">
        <title>Correlation of proteomic and transcriptomic profiles of Staphylococcus aureus during the post-exponential phase of growth.</title>
        <authorList>
            <person name="Scherl A."/>
            <person name="Francois P."/>
            <person name="Bento M."/>
            <person name="Deshusses J.M."/>
            <person name="Charbonnier Y."/>
            <person name="Converset V."/>
            <person name="Huyghe A."/>
            <person name="Walter N."/>
            <person name="Hoogland C."/>
            <person name="Appel R.D."/>
            <person name="Sanchez J.-C."/>
            <person name="Zimmermann-Ivol C.G."/>
            <person name="Corthals G.L."/>
            <person name="Hochstrasser D.F."/>
            <person name="Schrenzel J."/>
        </authorList>
    </citation>
    <scope>IDENTIFICATION BY MASS SPECTROMETRY</scope>
    <source>
        <strain>N315</strain>
    </source>
</reference>
<reference key="3">
    <citation type="submission" date="2007-10" db="UniProtKB">
        <title>Shotgun proteomic analysis of total and membrane protein extracts of S. aureus strain N315.</title>
        <authorList>
            <person name="Vaezzadeh A.R."/>
            <person name="Deshusses J."/>
            <person name="Lescuyer P."/>
            <person name="Hochstrasser D.F."/>
        </authorList>
    </citation>
    <scope>IDENTIFICATION BY MASS SPECTROMETRY [LARGE SCALE ANALYSIS]</scope>
    <source>
        <strain>N315</strain>
    </source>
</reference>
<feature type="chain" id="PRO_0000186549" description="PTS system glucose-specific EIIA component">
    <location>
        <begin position="1"/>
        <end position="166"/>
    </location>
</feature>
<feature type="domain" description="PTS EIIA type-1" evidence="2">
    <location>
        <begin position="34"/>
        <end position="138"/>
    </location>
</feature>
<feature type="active site" description="Tele-phosphohistidine intermediate; for EIIA activity" evidence="1 2">
    <location>
        <position position="86"/>
    </location>
</feature>
<feature type="binding site" evidence="1">
    <location>
        <position position="71"/>
    </location>
    <ligand>
        <name>Zn(2+)</name>
        <dbReference type="ChEBI" id="CHEBI:29105"/>
        <note>ligand shared with glycerol kinase</note>
    </ligand>
</feature>
<feature type="binding site" evidence="1">
    <location>
        <position position="86"/>
    </location>
    <ligand>
        <name>Zn(2+)</name>
        <dbReference type="ChEBI" id="CHEBI:29105"/>
        <note>ligand shared with glycerol kinase</note>
    </ligand>
</feature>
<feature type="site" description="Important for phospho-donor activity" evidence="1">
    <location>
        <position position="71"/>
    </location>
</feature>
<feature type="modified residue" description="Phosphohistidine; by HPr" evidence="1">
    <location>
        <position position="86"/>
    </location>
</feature>
<evidence type="ECO:0000250" key="1">
    <source>
        <dbReference type="UniProtKB" id="P69783"/>
    </source>
</evidence>
<evidence type="ECO:0000255" key="2">
    <source>
        <dbReference type="PROSITE-ProRule" id="PRU00416"/>
    </source>
</evidence>
<evidence type="ECO:0000305" key="3"/>